<comment type="function">
    <text evidence="3 5">Zinc phosphodiesterase, which displays some tRNA 3'-processing endonuclease activity (PubMed:12711671, PubMed:32075755). Specifically involved in tRNA repair: acts downstream of the ribosome-associated quality control (RQC) pathway by removing a 2',3'-cyclic phosphate from tRNAs following cleavage by ANKZF1 (PubMed:32075755). tRNAs are then processed by TRNT1 (PubMed:32075755).</text>
</comment>
<comment type="catalytic activity">
    <reaction evidence="3 5">
        <text>Endonucleolytic cleavage of RNA, removing extra 3' nucleotides from tRNA precursor, generating 3' termini of tRNAs. A 3'-hydroxy group is left at the tRNA terminus and a 5'-phosphoryl group is left at the trailer molecule.</text>
        <dbReference type="EC" id="3.1.26.11"/>
    </reaction>
</comment>
<comment type="cofactor">
    <cofactor evidence="6">
        <name>Zn(2+)</name>
        <dbReference type="ChEBI" id="CHEBI:29105"/>
    </cofactor>
    <text evidence="6">Binds 2 Zn(2+) ions.</text>
</comment>
<comment type="subunit">
    <text evidence="6">Homodimer.</text>
</comment>
<comment type="subcellular location">
    <subcellularLocation>
        <location evidence="4">Cytoplasm</location>
        <location evidence="4">Cytosol</location>
    </subcellularLocation>
    <subcellularLocation>
        <location evidence="4">Nucleus</location>
    </subcellularLocation>
    <text evidence="4">Mainly cytosolic.</text>
</comment>
<comment type="tissue specificity">
    <text evidence="2">Widely expressed (PubMed:11401430). Expressed in heart, brain, placenta, lung, liver, skeletal muscle, kidney and pancreas (PubMed:11401430).</text>
</comment>
<comment type="similarity">
    <text evidence="8">Belongs to the RNase Z family.</text>
</comment>
<name>RNZ1_HUMAN</name>
<gene>
    <name evidence="7 9" type="primary">ELAC1</name>
    <name type="synonym">D29</name>
</gene>
<reference key="1">
    <citation type="journal article" date="2001" name="Genomics">
        <title>Physical and transcriptional map of a 311-kb segment of chromosome 18q21, a candidate lung tumor suppressor locus.</title>
        <authorList>
            <person name="Yanaihara N."/>
            <person name="Kohno T."/>
            <person name="Takakura S."/>
            <person name="Takei K."/>
            <person name="Otsuka A."/>
            <person name="Sunaga N."/>
            <person name="Takahashi M."/>
            <person name="Yamazaki M."/>
            <person name="Tashiro H."/>
            <person name="Fukuzumi Y."/>
            <person name="Fujimori Y."/>
            <person name="Hagiwara K."/>
            <person name="Tanaka T."/>
            <person name="Yokota J."/>
        </authorList>
    </citation>
    <scope>NUCLEOTIDE SEQUENCE [MRNA]</scope>
    <scope>TISSUE SPECIFICITY</scope>
    <scope>VARIANT VAL-355</scope>
</reference>
<reference key="2">
    <citation type="journal article" date="2001" name="Nat. Genet.">
        <title>A candidate prostate cancer susceptibility gene at chromosome 17p.</title>
        <authorList>
            <person name="Tavtigian S.V."/>
            <person name="Simard J."/>
            <person name="Teng D.H.F."/>
            <person name="Abtin V."/>
            <person name="Baumgard M."/>
            <person name="Beck A."/>
            <person name="Camp N.J."/>
            <person name="Carillo A.R."/>
            <person name="Chen Y."/>
            <person name="Dayananth P."/>
            <person name="Desrochers M."/>
            <person name="Dumont M."/>
            <person name="Farnham J.M."/>
            <person name="Frank D."/>
            <person name="Frye C."/>
            <person name="Ghaffari S."/>
            <person name="Gupte J.S."/>
            <person name="Hu R."/>
            <person name="Iliev D."/>
            <person name="Janecki T."/>
            <person name="Kort E.N."/>
            <person name="Laity K.E."/>
            <person name="Leavitt A."/>
            <person name="Leblanc G."/>
            <person name="McArthur-Morrison J."/>
            <person name="Pederson A."/>
            <person name="Penn B."/>
            <person name="Peterson K.T."/>
            <person name="Reid J.E."/>
            <person name="Richards S."/>
            <person name="Schroeder M."/>
            <person name="Smith R."/>
            <person name="Snyder S.C."/>
            <person name="Swedlund B."/>
            <person name="Swensen J."/>
            <person name="Thomas A."/>
            <person name="Tranchant M."/>
            <person name="Woodland A.-M."/>
            <person name="Labrie F."/>
            <person name="Skolnick M.H."/>
            <person name="Neuhausen S."/>
            <person name="Rommens J."/>
            <person name="Cannon-Albright L.A."/>
        </authorList>
    </citation>
    <scope>NUCLEOTIDE SEQUENCE [MRNA]</scope>
</reference>
<reference key="3">
    <citation type="journal article" date="2004" name="Nat. Genet.">
        <title>Complete sequencing and characterization of 21,243 full-length human cDNAs.</title>
        <authorList>
            <person name="Ota T."/>
            <person name="Suzuki Y."/>
            <person name="Nishikawa T."/>
            <person name="Otsuki T."/>
            <person name="Sugiyama T."/>
            <person name="Irie R."/>
            <person name="Wakamatsu A."/>
            <person name="Hayashi K."/>
            <person name="Sato H."/>
            <person name="Nagai K."/>
            <person name="Kimura K."/>
            <person name="Makita H."/>
            <person name="Sekine M."/>
            <person name="Obayashi M."/>
            <person name="Nishi T."/>
            <person name="Shibahara T."/>
            <person name="Tanaka T."/>
            <person name="Ishii S."/>
            <person name="Yamamoto J."/>
            <person name="Saito K."/>
            <person name="Kawai Y."/>
            <person name="Isono Y."/>
            <person name="Nakamura Y."/>
            <person name="Nagahari K."/>
            <person name="Murakami K."/>
            <person name="Yasuda T."/>
            <person name="Iwayanagi T."/>
            <person name="Wagatsuma M."/>
            <person name="Shiratori A."/>
            <person name="Sudo H."/>
            <person name="Hosoiri T."/>
            <person name="Kaku Y."/>
            <person name="Kodaira H."/>
            <person name="Kondo H."/>
            <person name="Sugawara M."/>
            <person name="Takahashi M."/>
            <person name="Kanda K."/>
            <person name="Yokoi T."/>
            <person name="Furuya T."/>
            <person name="Kikkawa E."/>
            <person name="Omura Y."/>
            <person name="Abe K."/>
            <person name="Kamihara K."/>
            <person name="Katsuta N."/>
            <person name="Sato K."/>
            <person name="Tanikawa M."/>
            <person name="Yamazaki M."/>
            <person name="Ninomiya K."/>
            <person name="Ishibashi T."/>
            <person name="Yamashita H."/>
            <person name="Murakawa K."/>
            <person name="Fujimori K."/>
            <person name="Tanai H."/>
            <person name="Kimata M."/>
            <person name="Watanabe M."/>
            <person name="Hiraoka S."/>
            <person name="Chiba Y."/>
            <person name="Ishida S."/>
            <person name="Ono Y."/>
            <person name="Takiguchi S."/>
            <person name="Watanabe S."/>
            <person name="Yosida M."/>
            <person name="Hotuta T."/>
            <person name="Kusano J."/>
            <person name="Kanehori K."/>
            <person name="Takahashi-Fujii A."/>
            <person name="Hara H."/>
            <person name="Tanase T.-O."/>
            <person name="Nomura Y."/>
            <person name="Togiya S."/>
            <person name="Komai F."/>
            <person name="Hara R."/>
            <person name="Takeuchi K."/>
            <person name="Arita M."/>
            <person name="Imose N."/>
            <person name="Musashino K."/>
            <person name="Yuuki H."/>
            <person name="Oshima A."/>
            <person name="Sasaki N."/>
            <person name="Aotsuka S."/>
            <person name="Yoshikawa Y."/>
            <person name="Matsunawa H."/>
            <person name="Ichihara T."/>
            <person name="Shiohata N."/>
            <person name="Sano S."/>
            <person name="Moriya S."/>
            <person name="Momiyama H."/>
            <person name="Satoh N."/>
            <person name="Takami S."/>
            <person name="Terashima Y."/>
            <person name="Suzuki O."/>
            <person name="Nakagawa S."/>
            <person name="Senoh A."/>
            <person name="Mizoguchi H."/>
            <person name="Goto Y."/>
            <person name="Shimizu F."/>
            <person name="Wakebe H."/>
            <person name="Hishigaki H."/>
            <person name="Watanabe T."/>
            <person name="Sugiyama A."/>
            <person name="Takemoto M."/>
            <person name="Kawakami B."/>
            <person name="Yamazaki M."/>
            <person name="Watanabe K."/>
            <person name="Kumagai A."/>
            <person name="Itakura S."/>
            <person name="Fukuzumi Y."/>
            <person name="Fujimori Y."/>
            <person name="Komiyama M."/>
            <person name="Tashiro H."/>
            <person name="Tanigami A."/>
            <person name="Fujiwara T."/>
            <person name="Ono T."/>
            <person name="Yamada K."/>
            <person name="Fujii Y."/>
            <person name="Ozaki K."/>
            <person name="Hirao M."/>
            <person name="Ohmori Y."/>
            <person name="Kawabata A."/>
            <person name="Hikiji T."/>
            <person name="Kobatake N."/>
            <person name="Inagaki H."/>
            <person name="Ikema Y."/>
            <person name="Okamoto S."/>
            <person name="Okitani R."/>
            <person name="Kawakami T."/>
            <person name="Noguchi S."/>
            <person name="Itoh T."/>
            <person name="Shigeta K."/>
            <person name="Senba T."/>
            <person name="Matsumura K."/>
            <person name="Nakajima Y."/>
            <person name="Mizuno T."/>
            <person name="Morinaga M."/>
            <person name="Sasaki M."/>
            <person name="Togashi T."/>
            <person name="Oyama M."/>
            <person name="Hata H."/>
            <person name="Watanabe M."/>
            <person name="Komatsu T."/>
            <person name="Mizushima-Sugano J."/>
            <person name="Satoh T."/>
            <person name="Shirai Y."/>
            <person name="Takahashi Y."/>
            <person name="Nakagawa K."/>
            <person name="Okumura K."/>
            <person name="Nagase T."/>
            <person name="Nomura N."/>
            <person name="Kikuchi H."/>
            <person name="Masuho Y."/>
            <person name="Yamashita R."/>
            <person name="Nakai K."/>
            <person name="Yada T."/>
            <person name="Nakamura Y."/>
            <person name="Ohara O."/>
            <person name="Isogai T."/>
            <person name="Sugano S."/>
        </authorList>
    </citation>
    <scope>NUCLEOTIDE SEQUENCE [LARGE SCALE MRNA]</scope>
    <source>
        <tissue>Smooth muscle</tissue>
    </source>
</reference>
<reference key="4">
    <citation type="journal article" date="2004" name="Genome Res.">
        <title>The status, quality, and expansion of the NIH full-length cDNA project: the Mammalian Gene Collection (MGC).</title>
        <authorList>
            <consortium name="The MGC Project Team"/>
        </authorList>
    </citation>
    <scope>NUCLEOTIDE SEQUENCE [LARGE SCALE MRNA]</scope>
    <source>
        <tissue>Muscle</tissue>
    </source>
</reference>
<reference key="5">
    <citation type="journal article" date="2003" name="Nucleic Acids Res.">
        <title>A candidate prostate cancer susceptibility gene encodes tRNA 3' processing endoribonuclease.</title>
        <authorList>
            <person name="Takaku H."/>
            <person name="Minagawa A."/>
            <person name="Takagi M."/>
            <person name="Nashimoto M."/>
        </authorList>
    </citation>
    <scope>FUNCTION</scope>
    <scope>CATALYTIC ACTIVITY</scope>
</reference>
<reference key="6">
    <citation type="journal article" date="2011" name="RNA Biol.">
        <title>Involvement of human ELAC2 gene product in 3' end processing of mitochondrial tRNAs.</title>
        <authorList>
            <person name="Brzezniak L.K."/>
            <person name="Bijata M."/>
            <person name="Szczesny R.J."/>
            <person name="Stepien P.P."/>
        </authorList>
    </citation>
    <scope>SUBCELLULAR LOCATION</scope>
</reference>
<reference key="7">
    <citation type="journal article" date="2020" name="Cell Rep.">
        <title>ELAC1 repairs tRNAs cleaved during ribosome-associated quality control.</title>
        <authorList>
            <person name="Yip M.C.J."/>
            <person name="Savickas S."/>
            <person name="Gygi S.P."/>
            <person name="Shao S."/>
        </authorList>
    </citation>
    <scope>FUNCTION</scope>
    <scope>CATALYTIC ACTIVITY</scope>
</reference>
<reference evidence="10" key="8">
    <citation type="submission" date="2011-07" db="PDB data bank">
        <title>Crystal structure of human TRNase Z, short form (Elac1).</title>
        <authorList>
            <person name="Allerston C.K."/>
            <person name="Krojer T."/>
            <person name="Berridge G."/>
            <person name="Burgess-Brown N."/>
            <person name="Chaikuad A."/>
            <person name="Chalk R."/>
            <person name="Elkins J.M."/>
            <person name="Gileadi C."/>
            <person name="Latwiel S.V.A."/>
            <person name="Savitsky P."/>
            <person name="Vollmar M."/>
            <person name="Arrowsmith C.H."/>
            <person name="Weigelt J."/>
            <person name="Edwards A."/>
            <person name="Bountra C."/>
            <person name="von Delft F."/>
            <person name="Gileadi O."/>
        </authorList>
    </citation>
    <scope>X-RAY CRYSTALLOGRAPHY (1.70 ANGSTROMS) OF 3-363 IN COMPLEX WITH ZN(2+)</scope>
    <scope>MUTAGENESIS OF HIS-64</scope>
</reference>
<feature type="chain" id="PRO_0000155825" description="Zinc phosphodiesterase ELAC protein 1">
    <location>
        <begin position="1"/>
        <end position="363"/>
    </location>
</feature>
<feature type="active site" description="Proton acceptor" evidence="1">
    <location>
        <position position="66"/>
    </location>
</feature>
<feature type="binding site" evidence="6 10">
    <location>
        <position position="62"/>
    </location>
    <ligand>
        <name>Zn(2+)</name>
        <dbReference type="ChEBI" id="CHEBI:29105"/>
        <label>1</label>
        <note>catalytic</note>
    </ligand>
</feature>
<feature type="binding site" evidence="6 10">
    <location>
        <position position="64"/>
    </location>
    <ligand>
        <name>Zn(2+)</name>
        <dbReference type="ChEBI" id="CHEBI:29105"/>
        <label>1</label>
        <note>catalytic</note>
    </ligand>
</feature>
<feature type="binding site" evidence="6 10">
    <location>
        <position position="66"/>
    </location>
    <ligand>
        <name>Zn(2+)</name>
        <dbReference type="ChEBI" id="CHEBI:29105"/>
        <label>2</label>
        <note>catalytic</note>
    </ligand>
</feature>
<feature type="binding site" evidence="6 10">
    <location>
        <position position="67"/>
    </location>
    <ligand>
        <name>Zn(2+)</name>
        <dbReference type="ChEBI" id="CHEBI:29105"/>
        <label>2</label>
        <note>catalytic</note>
    </ligand>
</feature>
<feature type="binding site" evidence="6 10">
    <location>
        <position position="182"/>
    </location>
    <ligand>
        <name>Zn(2+)</name>
        <dbReference type="ChEBI" id="CHEBI:29105"/>
        <label>1</label>
        <note>catalytic</note>
    </ligand>
</feature>
<feature type="binding site" evidence="6 10">
    <location>
        <position position="253"/>
    </location>
    <ligand>
        <name>Zn(2+)</name>
        <dbReference type="ChEBI" id="CHEBI:29105"/>
        <label>1</label>
        <note>catalytic</note>
    </ligand>
</feature>
<feature type="binding site" evidence="6 10">
    <location>
        <position position="253"/>
    </location>
    <ligand>
        <name>Zn(2+)</name>
        <dbReference type="ChEBI" id="CHEBI:29105"/>
        <label>2</label>
        <note>catalytic</note>
    </ligand>
</feature>
<feature type="binding site" evidence="6 10">
    <location>
        <position position="313"/>
    </location>
    <ligand>
        <name>Zn(2+)</name>
        <dbReference type="ChEBI" id="CHEBI:29105"/>
        <label>2</label>
        <note>catalytic</note>
    </ligand>
</feature>
<feature type="sequence variant" id="VAR_017424" description="In dbSNP:rs34524743." evidence="2">
    <original>M</original>
    <variation>V</variation>
    <location>
        <position position="355"/>
    </location>
</feature>
<feature type="mutagenesis site" description="Abolsihed tRNase activity and ability to repair tRNAs downstream of ANKZF1." evidence="6">
    <original>H</original>
    <variation>A</variation>
    <location>
        <position position="64"/>
    </location>
</feature>
<feature type="sequence conflict" description="In Ref. 3; BAB15021." evidence="8" ref="3">
    <original>F</original>
    <variation>S</variation>
    <location>
        <position position="314"/>
    </location>
</feature>
<feature type="sequence conflict" description="In Ref. 3; BAB15021." evidence="8" ref="3">
    <original>S</original>
    <variation>G</variation>
    <location>
        <position position="358"/>
    </location>
</feature>
<feature type="strand" evidence="11">
    <location>
        <begin position="4"/>
        <end position="9"/>
    </location>
</feature>
<feature type="strand" evidence="11">
    <location>
        <begin position="11"/>
        <end position="14"/>
    </location>
</feature>
<feature type="strand" evidence="11">
    <location>
        <begin position="17"/>
        <end position="19"/>
    </location>
</feature>
<feature type="strand" evidence="11">
    <location>
        <begin position="21"/>
        <end position="28"/>
    </location>
</feature>
<feature type="strand" evidence="11">
    <location>
        <begin position="31"/>
        <end position="35"/>
    </location>
</feature>
<feature type="helix" evidence="11">
    <location>
        <begin position="41"/>
        <end position="47"/>
    </location>
</feature>
<feature type="strand" evidence="11">
    <location>
        <begin position="48"/>
        <end position="50"/>
    </location>
</feature>
<feature type="helix" evidence="11">
    <location>
        <begin position="52"/>
        <end position="54"/>
    </location>
</feature>
<feature type="strand" evidence="11">
    <location>
        <begin position="55"/>
        <end position="59"/>
    </location>
</feature>
<feature type="helix" evidence="11">
    <location>
        <begin position="65"/>
        <end position="67"/>
    </location>
</feature>
<feature type="turn" evidence="11">
    <location>
        <begin position="68"/>
        <end position="70"/>
    </location>
</feature>
<feature type="helix" evidence="11">
    <location>
        <begin position="71"/>
        <end position="81"/>
    </location>
</feature>
<feature type="strand" evidence="11">
    <location>
        <begin position="91"/>
        <end position="96"/>
    </location>
</feature>
<feature type="helix" evidence="11">
    <location>
        <begin position="99"/>
        <end position="109"/>
    </location>
</feature>
<feature type="strand" evidence="11">
    <location>
        <begin position="118"/>
        <end position="123"/>
    </location>
</feature>
<feature type="helix" evidence="11">
    <location>
        <begin position="127"/>
        <end position="129"/>
    </location>
</feature>
<feature type="turn" evidence="11">
    <location>
        <begin position="160"/>
        <end position="163"/>
    </location>
</feature>
<feature type="strand" evidence="11">
    <location>
        <begin position="164"/>
        <end position="169"/>
    </location>
</feature>
<feature type="strand" evidence="11">
    <location>
        <begin position="171"/>
        <end position="184"/>
    </location>
</feature>
<feature type="strand" evidence="11">
    <location>
        <begin position="186"/>
        <end position="193"/>
    </location>
</feature>
<feature type="strand" evidence="11">
    <location>
        <begin position="247"/>
        <end position="251"/>
    </location>
</feature>
<feature type="strand" evidence="11">
    <location>
        <begin position="255"/>
        <end position="257"/>
    </location>
</feature>
<feature type="helix" evidence="11">
    <location>
        <begin position="261"/>
        <end position="265"/>
    </location>
</feature>
<feature type="turn" evidence="11">
    <location>
        <begin position="266"/>
        <end position="268"/>
    </location>
</feature>
<feature type="strand" evidence="11">
    <location>
        <begin position="270"/>
        <end position="275"/>
    </location>
</feature>
<feature type="helix" evidence="11">
    <location>
        <begin position="280"/>
        <end position="282"/>
    </location>
</feature>
<feature type="helix" evidence="11">
    <location>
        <begin position="283"/>
        <end position="288"/>
    </location>
</feature>
<feature type="helix" evidence="11">
    <location>
        <begin position="294"/>
        <end position="303"/>
    </location>
</feature>
<feature type="strand" evidence="11">
    <location>
        <begin position="307"/>
        <end position="312"/>
    </location>
</feature>
<feature type="strand" evidence="11">
    <location>
        <begin position="347"/>
        <end position="350"/>
    </location>
</feature>
<feature type="strand" evidence="11">
    <location>
        <begin position="356"/>
        <end position="358"/>
    </location>
</feature>
<keyword id="KW-0002">3D-structure</keyword>
<keyword id="KW-0963">Cytoplasm</keyword>
<keyword id="KW-0255">Endonuclease</keyword>
<keyword id="KW-0378">Hydrolase</keyword>
<keyword id="KW-0479">Metal-binding</keyword>
<keyword id="KW-0540">Nuclease</keyword>
<keyword id="KW-0539">Nucleus</keyword>
<keyword id="KW-1267">Proteomics identification</keyword>
<keyword id="KW-1185">Reference proteome</keyword>
<keyword id="KW-0819">tRNA processing</keyword>
<keyword id="KW-0862">Zinc</keyword>
<dbReference type="EC" id="3.1.26.11" evidence="3 5"/>
<dbReference type="EMBL" id="AB029151">
    <property type="protein sequence ID" value="BAA96799.1"/>
    <property type="molecule type" value="mRNA"/>
</dbReference>
<dbReference type="EMBL" id="AF308695">
    <property type="protein sequence ID" value="AAG24917.1"/>
    <property type="molecule type" value="mRNA"/>
</dbReference>
<dbReference type="EMBL" id="AK024822">
    <property type="protein sequence ID" value="BAB15021.1"/>
    <property type="molecule type" value="mRNA"/>
</dbReference>
<dbReference type="EMBL" id="BC014624">
    <property type="protein sequence ID" value="AAH14624.1"/>
    <property type="molecule type" value="mRNA"/>
</dbReference>
<dbReference type="CCDS" id="CCDS11949.1"/>
<dbReference type="RefSeq" id="NP_061166.1">
    <property type="nucleotide sequence ID" value="NM_018696.3"/>
</dbReference>
<dbReference type="PDB" id="3ZWF">
    <property type="method" value="X-ray"/>
    <property type="resolution" value="1.70 A"/>
    <property type="chains" value="A/B=3-363"/>
</dbReference>
<dbReference type="PDBsum" id="3ZWF"/>
<dbReference type="SMR" id="Q9H777"/>
<dbReference type="BioGRID" id="120694">
    <property type="interactions" value="5"/>
</dbReference>
<dbReference type="FunCoup" id="Q9H777">
    <property type="interactions" value="2012"/>
</dbReference>
<dbReference type="STRING" id="9606.ENSP00000269466"/>
<dbReference type="GlyGen" id="Q9H777">
    <property type="glycosylation" value="1 site"/>
</dbReference>
<dbReference type="iPTMnet" id="Q9H777"/>
<dbReference type="PhosphoSitePlus" id="Q9H777"/>
<dbReference type="BioMuta" id="ELAC1"/>
<dbReference type="DMDM" id="41017799"/>
<dbReference type="jPOST" id="Q9H777"/>
<dbReference type="MassIVE" id="Q9H777"/>
<dbReference type="PaxDb" id="9606-ENSP00000269466"/>
<dbReference type="PeptideAtlas" id="Q9H777"/>
<dbReference type="ProteomicsDB" id="81086"/>
<dbReference type="Antibodypedia" id="22721">
    <property type="antibodies" value="241 antibodies from 20 providers"/>
</dbReference>
<dbReference type="DNASU" id="55520"/>
<dbReference type="Ensembl" id="ENST00000269466.8">
    <property type="protein sequence ID" value="ENSP00000269466.3"/>
    <property type="gene ID" value="ENSG00000141642.9"/>
</dbReference>
<dbReference type="GeneID" id="55520"/>
<dbReference type="KEGG" id="hsa:55520"/>
<dbReference type="MANE-Select" id="ENST00000269466.8">
    <property type="protein sequence ID" value="ENSP00000269466.3"/>
    <property type="RefSeq nucleotide sequence ID" value="NM_018696.3"/>
    <property type="RefSeq protein sequence ID" value="NP_061166.1"/>
</dbReference>
<dbReference type="UCSC" id="uc002lez.4">
    <property type="organism name" value="human"/>
</dbReference>
<dbReference type="AGR" id="HGNC:14197"/>
<dbReference type="CTD" id="55520"/>
<dbReference type="DisGeNET" id="55520"/>
<dbReference type="GeneCards" id="ELAC1"/>
<dbReference type="HGNC" id="HGNC:14197">
    <property type="gene designation" value="ELAC1"/>
</dbReference>
<dbReference type="HPA" id="ENSG00000141642">
    <property type="expression patterns" value="Low tissue specificity"/>
</dbReference>
<dbReference type="MIM" id="608079">
    <property type="type" value="gene"/>
</dbReference>
<dbReference type="neXtProt" id="NX_Q9H777"/>
<dbReference type="OpenTargets" id="ENSG00000141642"/>
<dbReference type="PharmGKB" id="PA27738"/>
<dbReference type="VEuPathDB" id="HostDB:ENSG00000141642"/>
<dbReference type="eggNOG" id="KOG2121">
    <property type="taxonomic scope" value="Eukaryota"/>
</dbReference>
<dbReference type="GeneTree" id="ENSGT00730000111224"/>
<dbReference type="HOGENOM" id="CLU_031317_2_2_1"/>
<dbReference type="InParanoid" id="Q9H777"/>
<dbReference type="OMA" id="GTQRQMM"/>
<dbReference type="OrthoDB" id="527344at2759"/>
<dbReference type="PAN-GO" id="Q9H777">
    <property type="GO annotations" value="3 GO annotations based on evolutionary models"/>
</dbReference>
<dbReference type="PhylomeDB" id="Q9H777"/>
<dbReference type="TreeFam" id="TF324462"/>
<dbReference type="BRENDA" id="3.1.26.11">
    <property type="organism ID" value="2681"/>
</dbReference>
<dbReference type="PathwayCommons" id="Q9H777"/>
<dbReference type="BioGRID-ORCS" id="55520">
    <property type="hits" value="6 hits in 1158 CRISPR screens"/>
</dbReference>
<dbReference type="ChiTaRS" id="ELAC1">
    <property type="organism name" value="human"/>
</dbReference>
<dbReference type="EvolutionaryTrace" id="Q9H777"/>
<dbReference type="GeneWiki" id="ELAC1"/>
<dbReference type="GenomeRNAi" id="55520"/>
<dbReference type="Pharos" id="Q9H777">
    <property type="development level" value="Tbio"/>
</dbReference>
<dbReference type="PRO" id="PR:Q9H777"/>
<dbReference type="Proteomes" id="UP000005640">
    <property type="component" value="Chromosome 18"/>
</dbReference>
<dbReference type="RNAct" id="Q9H777">
    <property type="molecule type" value="protein"/>
</dbReference>
<dbReference type="Bgee" id="ENSG00000141642">
    <property type="expression patterns" value="Expressed in islet of Langerhans and 130 other cell types or tissues"/>
</dbReference>
<dbReference type="ExpressionAtlas" id="Q9H777">
    <property type="expression patterns" value="baseline and differential"/>
</dbReference>
<dbReference type="GO" id="GO:0005829">
    <property type="term" value="C:cytosol"/>
    <property type="evidence" value="ECO:0000314"/>
    <property type="project" value="UniProtKB"/>
</dbReference>
<dbReference type="GO" id="GO:0005654">
    <property type="term" value="C:nucleoplasm"/>
    <property type="evidence" value="ECO:0000314"/>
    <property type="project" value="HPA"/>
</dbReference>
<dbReference type="GO" id="GO:0005634">
    <property type="term" value="C:nucleus"/>
    <property type="evidence" value="ECO:0000314"/>
    <property type="project" value="UniProtKB"/>
</dbReference>
<dbReference type="GO" id="GO:0042781">
    <property type="term" value="F:3'-tRNA processing endoribonuclease activity"/>
    <property type="evidence" value="ECO:0000318"/>
    <property type="project" value="GO_Central"/>
</dbReference>
<dbReference type="GO" id="GO:0046872">
    <property type="term" value="F:metal ion binding"/>
    <property type="evidence" value="ECO:0007669"/>
    <property type="project" value="UniProtKB-KW"/>
</dbReference>
<dbReference type="GO" id="GO:0004549">
    <property type="term" value="F:tRNA-specific ribonuclease activity"/>
    <property type="evidence" value="ECO:0000314"/>
    <property type="project" value="UniProtKB"/>
</dbReference>
<dbReference type="GO" id="GO:0072344">
    <property type="term" value="P:rescue of stalled ribosome"/>
    <property type="evidence" value="ECO:0000314"/>
    <property type="project" value="UniProt"/>
</dbReference>
<dbReference type="GO" id="GO:0042780">
    <property type="term" value="P:tRNA 3'-end processing"/>
    <property type="evidence" value="ECO:0000314"/>
    <property type="project" value="UniProtKB"/>
</dbReference>
<dbReference type="CDD" id="cd07717">
    <property type="entry name" value="RNaseZ_ZiPD-like_MBL-fold"/>
    <property type="match status" value="1"/>
</dbReference>
<dbReference type="FunFam" id="3.60.15.10:FF:000069">
    <property type="entry name" value="ElaC ribonuclease Z 1"/>
    <property type="match status" value="1"/>
</dbReference>
<dbReference type="Gene3D" id="3.60.15.10">
    <property type="entry name" value="Ribonuclease Z/Hydroxyacylglutathione hydrolase-like"/>
    <property type="match status" value="1"/>
</dbReference>
<dbReference type="HAMAP" id="MF_01818">
    <property type="entry name" value="RNase_Z_BN"/>
    <property type="match status" value="1"/>
</dbReference>
<dbReference type="InterPro" id="IPR001279">
    <property type="entry name" value="Metallo-B-lactamas"/>
</dbReference>
<dbReference type="InterPro" id="IPR036866">
    <property type="entry name" value="RibonucZ/Hydroxyglut_hydro"/>
</dbReference>
<dbReference type="InterPro" id="IPR013471">
    <property type="entry name" value="RNase_Z/BN"/>
</dbReference>
<dbReference type="NCBIfam" id="NF000801">
    <property type="entry name" value="PRK00055.1-3"/>
    <property type="match status" value="1"/>
</dbReference>
<dbReference type="NCBIfam" id="TIGR02651">
    <property type="entry name" value="RNase_Z"/>
    <property type="match status" value="1"/>
</dbReference>
<dbReference type="PANTHER" id="PTHR46018">
    <property type="entry name" value="ZINC PHOSPHODIESTERASE ELAC PROTEIN 1"/>
    <property type="match status" value="1"/>
</dbReference>
<dbReference type="PANTHER" id="PTHR46018:SF2">
    <property type="entry name" value="ZINC PHOSPHODIESTERASE ELAC PROTEIN 1"/>
    <property type="match status" value="1"/>
</dbReference>
<dbReference type="Pfam" id="PF00753">
    <property type="entry name" value="Lactamase_B"/>
    <property type="match status" value="1"/>
</dbReference>
<dbReference type="SUPFAM" id="SSF56281">
    <property type="entry name" value="Metallo-hydrolase/oxidoreductase"/>
    <property type="match status" value="1"/>
</dbReference>
<proteinExistence type="evidence at protein level"/>
<sequence>MSMDVTFLGTGAAYPSPTRGASAVVLRCEGECWLFDCGEGTQTQLMKSQLKAGRITKIFITHLHGDHFFGLPGLLCTISLQSGSMVSKQPIEIYGPVGLRDFIWRTMELSHTELVFHYVVHELVPTADQCPAEELKEFAHVNRADSPPKEEQGRTILLDSEENSYLLFDDEQFVVKAFRLFHRIPSFGFSVVEKKRPGKLNAQKLKDLGVPPGPAYGKLKNGISVVLENGVTISPQDVLKKPIVGRKICILGDCSGVVGDGGVKLCFEADLLIHEATLDDAQMDKAKEHGHSTPQMAATFAKLCRAKRLVLTHFSQRYKPVALAREGETDGIAELKKQAESVLDLQEVTLAEDFMVISIPIKK</sequence>
<evidence type="ECO:0000250" key="1">
    <source>
        <dbReference type="UniProtKB" id="P54548"/>
    </source>
</evidence>
<evidence type="ECO:0000269" key="2">
    <source>
    </source>
</evidence>
<evidence type="ECO:0000269" key="3">
    <source>
    </source>
</evidence>
<evidence type="ECO:0000269" key="4">
    <source>
    </source>
</evidence>
<evidence type="ECO:0000269" key="5">
    <source>
    </source>
</evidence>
<evidence type="ECO:0000269" key="6">
    <source ref="8"/>
</evidence>
<evidence type="ECO:0000303" key="7">
    <source>
    </source>
</evidence>
<evidence type="ECO:0000305" key="8"/>
<evidence type="ECO:0000312" key="9">
    <source>
        <dbReference type="HGNC" id="HGNC:14197"/>
    </source>
</evidence>
<evidence type="ECO:0007744" key="10">
    <source>
        <dbReference type="PDB" id="3ZWF"/>
    </source>
</evidence>
<evidence type="ECO:0007829" key="11">
    <source>
        <dbReference type="PDB" id="3ZWF"/>
    </source>
</evidence>
<protein>
    <recommendedName>
        <fullName>Zinc phosphodiesterase ELAC protein 1</fullName>
        <ecNumber evidence="3 5">3.1.26.11</ecNumber>
    </recommendedName>
    <alternativeName>
        <fullName>Deleted in Ma29</fullName>
    </alternativeName>
    <alternativeName>
        <fullName>ElaC homolog protein 1</fullName>
    </alternativeName>
    <alternativeName>
        <fullName>Ribonuclease Z 1</fullName>
        <shortName>RNase Z 1</shortName>
    </alternativeName>
    <alternativeName>
        <fullName>tRNA 3 endonuclease 1</fullName>
    </alternativeName>
    <alternativeName>
        <fullName>tRNase Z 1</fullName>
    </alternativeName>
</protein>
<organism>
    <name type="scientific">Homo sapiens</name>
    <name type="common">Human</name>
    <dbReference type="NCBI Taxonomy" id="9606"/>
    <lineage>
        <taxon>Eukaryota</taxon>
        <taxon>Metazoa</taxon>
        <taxon>Chordata</taxon>
        <taxon>Craniata</taxon>
        <taxon>Vertebrata</taxon>
        <taxon>Euteleostomi</taxon>
        <taxon>Mammalia</taxon>
        <taxon>Eutheria</taxon>
        <taxon>Euarchontoglires</taxon>
        <taxon>Primates</taxon>
        <taxon>Haplorrhini</taxon>
        <taxon>Catarrhini</taxon>
        <taxon>Hominidae</taxon>
        <taxon>Homo</taxon>
    </lineage>
</organism>
<accession>Q9H777</accession>
<accession>Q9NS99</accession>